<keyword id="KW-0963">Cytoplasm</keyword>
<keyword id="KW-0501">Molybdenum cofactor biosynthesis</keyword>
<keyword id="KW-0547">Nucleotide-binding</keyword>
<keyword id="KW-0597">Phosphoprotein</keyword>
<evidence type="ECO:0000255" key="1">
    <source>
        <dbReference type="HAMAP-Rule" id="MF_03051"/>
    </source>
</evidence>
<evidence type="ECO:0000305" key="2"/>
<reference key="1">
    <citation type="journal article" date="2007" name="Plant Cell">
        <title>Dothideomycete-plant interactions illuminated by genome sequencing and EST analysis of the wheat pathogen Stagonospora nodorum.</title>
        <authorList>
            <person name="Hane J.K."/>
            <person name="Lowe R.G.T."/>
            <person name="Solomon P.S."/>
            <person name="Tan K.-C."/>
            <person name="Schoch C.L."/>
            <person name="Spatafora J.W."/>
            <person name="Crous P.W."/>
            <person name="Kodira C.D."/>
            <person name="Birren B.W."/>
            <person name="Galagan J.E."/>
            <person name="Torriani S.F.F."/>
            <person name="McDonald B.A."/>
            <person name="Oliver R.P."/>
        </authorList>
    </citation>
    <scope>NUCLEOTIDE SEQUENCE [LARGE SCALE GENOMIC DNA]</scope>
    <source>
        <strain>SN15 / ATCC MYA-4574 / FGSC 10173</strain>
    </source>
</reference>
<protein>
    <recommendedName>
        <fullName evidence="1">Molybdopterin synthase sulfur carrier subunit</fullName>
    </recommendedName>
    <alternativeName>
        <fullName evidence="1">Common component for nitrate reductase and xanthine dehydrogenase protein G</fullName>
    </alternativeName>
    <alternativeName>
        <fullName evidence="1">Molybdenum cofactor synthesis protein 2 small subunit</fullName>
    </alternativeName>
    <alternativeName>
        <fullName evidence="1">Molybdenum cofactor synthesis protein 2A</fullName>
        <shortName evidence="1">MOCS2A</shortName>
    </alternativeName>
    <alternativeName>
        <fullName evidence="1">Sulfur carrier protein MOCS2A</fullName>
    </alternativeName>
</protein>
<feature type="chain" id="PRO_0000369323" description="Molybdopterin synthase sulfur carrier subunit">
    <location>
        <begin position="1"/>
        <end position="96"/>
    </location>
</feature>
<feature type="modified residue" description="1-thioglycine; alternate" evidence="1">
    <location>
        <position position="96"/>
    </location>
</feature>
<feature type="modified residue" description="Glycyl adenylate; alternate" evidence="1">
    <location>
        <position position="96"/>
    </location>
</feature>
<accession>Q0V5W8</accession>
<organism>
    <name type="scientific">Phaeosphaeria nodorum (strain SN15 / ATCC MYA-4574 / FGSC 10173)</name>
    <name type="common">Glume blotch fungus</name>
    <name type="synonym">Parastagonospora nodorum</name>
    <dbReference type="NCBI Taxonomy" id="321614"/>
    <lineage>
        <taxon>Eukaryota</taxon>
        <taxon>Fungi</taxon>
        <taxon>Dikarya</taxon>
        <taxon>Ascomycota</taxon>
        <taxon>Pezizomycotina</taxon>
        <taxon>Dothideomycetes</taxon>
        <taxon>Pleosporomycetidae</taxon>
        <taxon>Pleosporales</taxon>
        <taxon>Pleosporineae</taxon>
        <taxon>Phaeosphaeriaceae</taxon>
        <taxon>Parastagonospora</taxon>
    </lineage>
</organism>
<comment type="function">
    <text evidence="1">Acts as a sulfur carrier required for molybdopterin biosynthesis. Component of the molybdopterin synthase complex that catalyzes the conversion of precursor Z into molybdopterin by mediating the incorporation of 2 sulfur atoms into precursor Z to generate a dithiolene group. In the complex, serves as sulfur donor by being thiocarboxylated (-COSH) at its C-terminus by UBA4. After interaction with MOCS2B, the sulfur is then transferred to precursor Z to form molybdopterin.</text>
</comment>
<comment type="pathway">
    <text evidence="1">Cofactor biosynthesis; molybdopterin biosynthesis.</text>
</comment>
<comment type="subunit">
    <text evidence="1">Heterotetramer; composed of 2 small (MOCS2A) and 2 large (MOCS2B) subunits.</text>
</comment>
<comment type="subcellular location">
    <subcellularLocation>
        <location evidence="1">Cytoplasm</location>
    </subcellularLocation>
</comment>
<comment type="PTM">
    <text evidence="1">C-terminal thiocarboxylation occurs in 2 steps, it is first acyl-adenylated (-COAMP) via the hesA/moeB/thiF part of UBA4, then thiocarboxylated (-COSH) via the rhodanese domain of UBA4.</text>
</comment>
<comment type="similarity">
    <text evidence="1">Belongs to the MoaD family. MOCS2A subfamily.</text>
</comment>
<comment type="sequence caution" evidence="2">
    <conflict type="erroneous initiation">
        <sequence resource="EMBL-CDS" id="EAT92091"/>
    </conflict>
</comment>
<proteinExistence type="inferred from homology"/>
<name>MOC2A_PHANO</name>
<sequence>MASKKAPTGHFSILYFAAASTFTGKTSEHLPAPIKACDLFDTLEDRYPGIKGKVLASCAVTVDLEYIDINEGDAADLERVIQEGDEVAIIPPVSSG</sequence>
<dbReference type="EMBL" id="CH445325">
    <property type="protein sequence ID" value="EAT92091.1"/>
    <property type="status" value="ALT_INIT"/>
    <property type="molecule type" value="Genomic_DNA"/>
</dbReference>
<dbReference type="RefSeq" id="XP_001791276.1">
    <property type="nucleotide sequence ID" value="XM_001791224.1"/>
</dbReference>
<dbReference type="SMR" id="Q0V5W8"/>
<dbReference type="STRING" id="321614.Q0V5W8"/>
<dbReference type="GeneID" id="5967598"/>
<dbReference type="KEGG" id="pno:SNOG_00596"/>
<dbReference type="VEuPathDB" id="FungiDB:JI435_005960"/>
<dbReference type="InParanoid" id="Q0V5W8"/>
<dbReference type="OrthoDB" id="5595860at2759"/>
<dbReference type="UniPathway" id="UPA00344"/>
<dbReference type="Proteomes" id="UP000001055">
    <property type="component" value="Unassembled WGS sequence"/>
</dbReference>
<dbReference type="GO" id="GO:1990133">
    <property type="term" value="C:molybdopterin adenylyltransferase complex"/>
    <property type="evidence" value="ECO:0000318"/>
    <property type="project" value="GO_Central"/>
</dbReference>
<dbReference type="GO" id="GO:1990140">
    <property type="term" value="C:molybdopterin synthase complex"/>
    <property type="evidence" value="ECO:0000250"/>
    <property type="project" value="UniProtKB"/>
</dbReference>
<dbReference type="GO" id="GO:0030366">
    <property type="term" value="F:molybdopterin synthase activity"/>
    <property type="evidence" value="ECO:0007669"/>
    <property type="project" value="UniProtKB-UniRule"/>
</dbReference>
<dbReference type="GO" id="GO:0000166">
    <property type="term" value="F:nucleotide binding"/>
    <property type="evidence" value="ECO:0007669"/>
    <property type="project" value="UniProtKB-KW"/>
</dbReference>
<dbReference type="GO" id="GO:0006777">
    <property type="term" value="P:Mo-molybdopterin cofactor biosynthetic process"/>
    <property type="evidence" value="ECO:0000250"/>
    <property type="project" value="UniProtKB"/>
</dbReference>
<dbReference type="CDD" id="cd00754">
    <property type="entry name" value="Ubl_MoaD"/>
    <property type="match status" value="1"/>
</dbReference>
<dbReference type="Gene3D" id="3.10.20.30">
    <property type="match status" value="1"/>
</dbReference>
<dbReference type="HAMAP" id="MF_03051">
    <property type="entry name" value="MOCS2A"/>
    <property type="match status" value="1"/>
</dbReference>
<dbReference type="InterPro" id="IPR012675">
    <property type="entry name" value="Beta-grasp_dom_sf"/>
</dbReference>
<dbReference type="InterPro" id="IPR044672">
    <property type="entry name" value="MOCS2A"/>
</dbReference>
<dbReference type="InterPro" id="IPR028887">
    <property type="entry name" value="MOCS2A_euk"/>
</dbReference>
<dbReference type="InterPro" id="IPR016155">
    <property type="entry name" value="Mopterin_synth/thiamin_S_b"/>
</dbReference>
<dbReference type="InterPro" id="IPR003749">
    <property type="entry name" value="ThiS/MoaD-like"/>
</dbReference>
<dbReference type="PANTHER" id="PTHR33359">
    <property type="entry name" value="MOLYBDOPTERIN SYNTHASE SULFUR CARRIER SUBUNIT"/>
    <property type="match status" value="1"/>
</dbReference>
<dbReference type="PANTHER" id="PTHR33359:SF1">
    <property type="entry name" value="MOLYBDOPTERIN SYNTHASE SULFUR CARRIER SUBUNIT"/>
    <property type="match status" value="1"/>
</dbReference>
<dbReference type="Pfam" id="PF02597">
    <property type="entry name" value="ThiS"/>
    <property type="match status" value="1"/>
</dbReference>
<dbReference type="SUPFAM" id="SSF54285">
    <property type="entry name" value="MoaD/ThiS"/>
    <property type="match status" value="1"/>
</dbReference>
<gene>
    <name evidence="1" type="primary">cnxG</name>
    <name type="ORF">SNOG_00596</name>
</gene>